<name>RS14Z_SALAI</name>
<comment type="function">
    <text evidence="1">Binds 16S rRNA, required for the assembly of 30S particles and may also be responsible for determining the conformation of the 16S rRNA at the A site.</text>
</comment>
<comment type="cofactor">
    <cofactor evidence="1">
        <name>Zn(2+)</name>
        <dbReference type="ChEBI" id="CHEBI:29105"/>
    </cofactor>
    <text evidence="1">Binds 1 zinc ion per subunit.</text>
</comment>
<comment type="subunit">
    <text evidence="1">Part of the 30S ribosomal subunit. Contacts proteins S3 and S10.</text>
</comment>
<comment type="similarity">
    <text evidence="1">Belongs to the universal ribosomal protein uS14 family. Zinc-binding uS14 subfamily.</text>
</comment>
<reference key="1">
    <citation type="submission" date="2007-10" db="EMBL/GenBank/DDBJ databases">
        <title>Complete sequence of Salinispora arenicola CNS-205.</title>
        <authorList>
            <consortium name="US DOE Joint Genome Institute"/>
            <person name="Copeland A."/>
            <person name="Lucas S."/>
            <person name="Lapidus A."/>
            <person name="Barry K."/>
            <person name="Glavina del Rio T."/>
            <person name="Dalin E."/>
            <person name="Tice H."/>
            <person name="Pitluck S."/>
            <person name="Foster B."/>
            <person name="Schmutz J."/>
            <person name="Larimer F."/>
            <person name="Land M."/>
            <person name="Hauser L."/>
            <person name="Kyrpides N."/>
            <person name="Ivanova N."/>
            <person name="Jensen P.R."/>
            <person name="Moore B.S."/>
            <person name="Penn K."/>
            <person name="Jenkins C."/>
            <person name="Udwary D."/>
            <person name="Xiang L."/>
            <person name="Gontang E."/>
            <person name="Richardson P."/>
        </authorList>
    </citation>
    <scope>NUCLEOTIDE SEQUENCE [LARGE SCALE GENOMIC DNA]</scope>
    <source>
        <strain>CNS-205</strain>
    </source>
</reference>
<sequence length="61" mass="6895">MAKKALILKAAAKPKFSVRAYTRCQRCGRPKAVYRKFGLCRVCIREMAHRGELPGVSKASW</sequence>
<feature type="chain" id="PRO_1000087020" description="Small ribosomal subunit protein uS14B">
    <location>
        <begin position="1"/>
        <end position="61"/>
    </location>
</feature>
<feature type="binding site" evidence="1">
    <location>
        <position position="24"/>
    </location>
    <ligand>
        <name>Zn(2+)</name>
        <dbReference type="ChEBI" id="CHEBI:29105"/>
    </ligand>
</feature>
<feature type="binding site" evidence="1">
    <location>
        <position position="27"/>
    </location>
    <ligand>
        <name>Zn(2+)</name>
        <dbReference type="ChEBI" id="CHEBI:29105"/>
    </ligand>
</feature>
<feature type="binding site" evidence="1">
    <location>
        <position position="40"/>
    </location>
    <ligand>
        <name>Zn(2+)</name>
        <dbReference type="ChEBI" id="CHEBI:29105"/>
    </ligand>
</feature>
<feature type="binding site" evidence="1">
    <location>
        <position position="43"/>
    </location>
    <ligand>
        <name>Zn(2+)</name>
        <dbReference type="ChEBI" id="CHEBI:29105"/>
    </ligand>
</feature>
<accession>A8M516</accession>
<gene>
    <name evidence="1" type="primary">rpsZ</name>
    <name evidence="1" type="synonym">rpsN</name>
    <name type="ordered locus">Sare_4302</name>
</gene>
<organism>
    <name type="scientific">Salinispora arenicola (strain CNS-205)</name>
    <dbReference type="NCBI Taxonomy" id="391037"/>
    <lineage>
        <taxon>Bacteria</taxon>
        <taxon>Bacillati</taxon>
        <taxon>Actinomycetota</taxon>
        <taxon>Actinomycetes</taxon>
        <taxon>Micromonosporales</taxon>
        <taxon>Micromonosporaceae</taxon>
        <taxon>Salinispora</taxon>
    </lineage>
</organism>
<keyword id="KW-0479">Metal-binding</keyword>
<keyword id="KW-0687">Ribonucleoprotein</keyword>
<keyword id="KW-0689">Ribosomal protein</keyword>
<keyword id="KW-0694">RNA-binding</keyword>
<keyword id="KW-0699">rRNA-binding</keyword>
<keyword id="KW-0862">Zinc</keyword>
<proteinExistence type="inferred from homology"/>
<dbReference type="EMBL" id="CP000850">
    <property type="protein sequence ID" value="ABW00084.1"/>
    <property type="molecule type" value="Genomic_DNA"/>
</dbReference>
<dbReference type="SMR" id="A8M516"/>
<dbReference type="STRING" id="391037.Sare_4302"/>
<dbReference type="KEGG" id="saq:Sare_4302"/>
<dbReference type="eggNOG" id="COG0199">
    <property type="taxonomic scope" value="Bacteria"/>
</dbReference>
<dbReference type="HOGENOM" id="CLU_139869_3_0_11"/>
<dbReference type="OrthoDB" id="9810484at2"/>
<dbReference type="GO" id="GO:0005737">
    <property type="term" value="C:cytoplasm"/>
    <property type="evidence" value="ECO:0007669"/>
    <property type="project" value="UniProtKB-ARBA"/>
</dbReference>
<dbReference type="GO" id="GO:0015935">
    <property type="term" value="C:small ribosomal subunit"/>
    <property type="evidence" value="ECO:0007669"/>
    <property type="project" value="TreeGrafter"/>
</dbReference>
<dbReference type="GO" id="GO:0019843">
    <property type="term" value="F:rRNA binding"/>
    <property type="evidence" value="ECO:0007669"/>
    <property type="project" value="UniProtKB-UniRule"/>
</dbReference>
<dbReference type="GO" id="GO:0003735">
    <property type="term" value="F:structural constituent of ribosome"/>
    <property type="evidence" value="ECO:0007669"/>
    <property type="project" value="InterPro"/>
</dbReference>
<dbReference type="GO" id="GO:0008270">
    <property type="term" value="F:zinc ion binding"/>
    <property type="evidence" value="ECO:0007669"/>
    <property type="project" value="UniProtKB-UniRule"/>
</dbReference>
<dbReference type="GO" id="GO:0006412">
    <property type="term" value="P:translation"/>
    <property type="evidence" value="ECO:0007669"/>
    <property type="project" value="UniProtKB-UniRule"/>
</dbReference>
<dbReference type="FunFam" id="4.10.830.10:FF:000001">
    <property type="entry name" value="30S ribosomal protein S14 type Z"/>
    <property type="match status" value="1"/>
</dbReference>
<dbReference type="Gene3D" id="4.10.830.10">
    <property type="entry name" value="30s Ribosomal Protein S14, Chain N"/>
    <property type="match status" value="1"/>
</dbReference>
<dbReference type="HAMAP" id="MF_01364_B">
    <property type="entry name" value="Ribosomal_uS14_2_B"/>
    <property type="match status" value="1"/>
</dbReference>
<dbReference type="InterPro" id="IPR001209">
    <property type="entry name" value="Ribosomal_uS14"/>
</dbReference>
<dbReference type="InterPro" id="IPR023053">
    <property type="entry name" value="Ribosomal_uS14_bact"/>
</dbReference>
<dbReference type="InterPro" id="IPR018271">
    <property type="entry name" value="Ribosomal_uS14_CS"/>
</dbReference>
<dbReference type="InterPro" id="IPR043140">
    <property type="entry name" value="Ribosomal_uS14_sf"/>
</dbReference>
<dbReference type="NCBIfam" id="NF005974">
    <property type="entry name" value="PRK08061.1"/>
    <property type="match status" value="1"/>
</dbReference>
<dbReference type="PANTHER" id="PTHR19836">
    <property type="entry name" value="30S RIBOSOMAL PROTEIN S14"/>
    <property type="match status" value="1"/>
</dbReference>
<dbReference type="PANTHER" id="PTHR19836:SF19">
    <property type="entry name" value="SMALL RIBOSOMAL SUBUNIT PROTEIN US14M"/>
    <property type="match status" value="1"/>
</dbReference>
<dbReference type="Pfam" id="PF00253">
    <property type="entry name" value="Ribosomal_S14"/>
    <property type="match status" value="1"/>
</dbReference>
<dbReference type="SUPFAM" id="SSF57716">
    <property type="entry name" value="Glucocorticoid receptor-like (DNA-binding domain)"/>
    <property type="match status" value="1"/>
</dbReference>
<dbReference type="PROSITE" id="PS00527">
    <property type="entry name" value="RIBOSOMAL_S14"/>
    <property type="match status" value="1"/>
</dbReference>
<evidence type="ECO:0000255" key="1">
    <source>
        <dbReference type="HAMAP-Rule" id="MF_01364"/>
    </source>
</evidence>
<evidence type="ECO:0000305" key="2"/>
<protein>
    <recommendedName>
        <fullName evidence="1">Small ribosomal subunit protein uS14B</fullName>
    </recommendedName>
    <alternativeName>
        <fullName evidence="2">30S ribosomal protein S14 type Z</fullName>
    </alternativeName>
</protein>